<feature type="chain" id="PRO_0000242219" description="Peptide chain release factor 3">
    <location>
        <begin position="1"/>
        <end position="528"/>
    </location>
</feature>
<feature type="domain" description="tr-type G">
    <location>
        <begin position="9"/>
        <end position="280"/>
    </location>
</feature>
<feature type="binding site" evidence="1">
    <location>
        <begin position="18"/>
        <end position="25"/>
    </location>
    <ligand>
        <name>GTP</name>
        <dbReference type="ChEBI" id="CHEBI:37565"/>
    </ligand>
</feature>
<feature type="binding site" evidence="1">
    <location>
        <begin position="86"/>
        <end position="90"/>
    </location>
    <ligand>
        <name>GTP</name>
        <dbReference type="ChEBI" id="CHEBI:37565"/>
    </ligand>
</feature>
<feature type="binding site" evidence="1">
    <location>
        <begin position="140"/>
        <end position="143"/>
    </location>
    <ligand>
        <name>GTP</name>
        <dbReference type="ChEBI" id="CHEBI:37565"/>
    </ligand>
</feature>
<keyword id="KW-0963">Cytoplasm</keyword>
<keyword id="KW-0342">GTP-binding</keyword>
<keyword id="KW-0547">Nucleotide-binding</keyword>
<keyword id="KW-0648">Protein biosynthesis</keyword>
<keyword id="KW-1185">Reference proteome</keyword>
<dbReference type="EMBL" id="AP006840">
    <property type="protein sequence ID" value="BAD41008.1"/>
    <property type="status" value="ALT_INIT"/>
    <property type="molecule type" value="Genomic_DNA"/>
</dbReference>
<dbReference type="SMR" id="Q67MT5"/>
<dbReference type="STRING" id="292459.STH2023"/>
<dbReference type="KEGG" id="sth:STH2023"/>
<dbReference type="eggNOG" id="COG4108">
    <property type="taxonomic scope" value="Bacteria"/>
</dbReference>
<dbReference type="HOGENOM" id="CLU_002794_2_1_9"/>
<dbReference type="Proteomes" id="UP000000417">
    <property type="component" value="Chromosome"/>
</dbReference>
<dbReference type="GO" id="GO:0005829">
    <property type="term" value="C:cytosol"/>
    <property type="evidence" value="ECO:0007669"/>
    <property type="project" value="TreeGrafter"/>
</dbReference>
<dbReference type="GO" id="GO:0005525">
    <property type="term" value="F:GTP binding"/>
    <property type="evidence" value="ECO:0007669"/>
    <property type="project" value="UniProtKB-UniRule"/>
</dbReference>
<dbReference type="GO" id="GO:0003924">
    <property type="term" value="F:GTPase activity"/>
    <property type="evidence" value="ECO:0007669"/>
    <property type="project" value="InterPro"/>
</dbReference>
<dbReference type="GO" id="GO:0016150">
    <property type="term" value="F:translation release factor activity, codon nonspecific"/>
    <property type="evidence" value="ECO:0007669"/>
    <property type="project" value="TreeGrafter"/>
</dbReference>
<dbReference type="GO" id="GO:0016149">
    <property type="term" value="F:translation release factor activity, codon specific"/>
    <property type="evidence" value="ECO:0007669"/>
    <property type="project" value="UniProtKB-UniRule"/>
</dbReference>
<dbReference type="GO" id="GO:0006449">
    <property type="term" value="P:regulation of translational termination"/>
    <property type="evidence" value="ECO:0007669"/>
    <property type="project" value="UniProtKB-UniRule"/>
</dbReference>
<dbReference type="CDD" id="cd04169">
    <property type="entry name" value="RF3"/>
    <property type="match status" value="1"/>
</dbReference>
<dbReference type="CDD" id="cd03689">
    <property type="entry name" value="RF3_II"/>
    <property type="match status" value="1"/>
</dbReference>
<dbReference type="CDD" id="cd16259">
    <property type="entry name" value="RF3_III"/>
    <property type="match status" value="1"/>
</dbReference>
<dbReference type="FunFam" id="2.40.30.10:FF:000040">
    <property type="entry name" value="Peptide chain release factor 3"/>
    <property type="match status" value="1"/>
</dbReference>
<dbReference type="FunFam" id="3.30.70.3280:FF:000001">
    <property type="entry name" value="Peptide chain release factor 3"/>
    <property type="match status" value="1"/>
</dbReference>
<dbReference type="FunFam" id="3.40.50.300:FF:000542">
    <property type="entry name" value="Peptide chain release factor 3"/>
    <property type="match status" value="1"/>
</dbReference>
<dbReference type="Gene3D" id="3.40.50.300">
    <property type="entry name" value="P-loop containing nucleotide triphosphate hydrolases"/>
    <property type="match status" value="1"/>
</dbReference>
<dbReference type="Gene3D" id="3.30.70.3280">
    <property type="entry name" value="Peptide chain release factor 3, domain III"/>
    <property type="match status" value="1"/>
</dbReference>
<dbReference type="Gene3D" id="2.40.30.10">
    <property type="entry name" value="Translation factors"/>
    <property type="match status" value="1"/>
</dbReference>
<dbReference type="HAMAP" id="MF_00072">
    <property type="entry name" value="Rel_fac_3"/>
    <property type="match status" value="1"/>
</dbReference>
<dbReference type="InterPro" id="IPR053905">
    <property type="entry name" value="EF-G-like_DII"/>
</dbReference>
<dbReference type="InterPro" id="IPR035647">
    <property type="entry name" value="EFG_III/V"/>
</dbReference>
<dbReference type="InterPro" id="IPR031157">
    <property type="entry name" value="G_TR_CS"/>
</dbReference>
<dbReference type="InterPro" id="IPR027417">
    <property type="entry name" value="P-loop_NTPase"/>
</dbReference>
<dbReference type="InterPro" id="IPR004548">
    <property type="entry name" value="PrfC"/>
</dbReference>
<dbReference type="InterPro" id="IPR032090">
    <property type="entry name" value="RF3_C"/>
</dbReference>
<dbReference type="InterPro" id="IPR038467">
    <property type="entry name" value="RF3_dom_3_sf"/>
</dbReference>
<dbReference type="InterPro" id="IPR041732">
    <property type="entry name" value="RF3_GTP-bd"/>
</dbReference>
<dbReference type="InterPro" id="IPR005225">
    <property type="entry name" value="Small_GTP-bd"/>
</dbReference>
<dbReference type="InterPro" id="IPR000795">
    <property type="entry name" value="T_Tr_GTP-bd_dom"/>
</dbReference>
<dbReference type="InterPro" id="IPR009000">
    <property type="entry name" value="Transl_B-barrel_sf"/>
</dbReference>
<dbReference type="NCBIfam" id="TIGR00503">
    <property type="entry name" value="prfC"/>
    <property type="match status" value="1"/>
</dbReference>
<dbReference type="NCBIfam" id="NF001964">
    <property type="entry name" value="PRK00741.1"/>
    <property type="match status" value="1"/>
</dbReference>
<dbReference type="NCBIfam" id="TIGR00231">
    <property type="entry name" value="small_GTP"/>
    <property type="match status" value="1"/>
</dbReference>
<dbReference type="PANTHER" id="PTHR43556">
    <property type="entry name" value="PEPTIDE CHAIN RELEASE FACTOR RF3"/>
    <property type="match status" value="1"/>
</dbReference>
<dbReference type="PANTHER" id="PTHR43556:SF2">
    <property type="entry name" value="PEPTIDE CHAIN RELEASE FACTOR RF3"/>
    <property type="match status" value="1"/>
</dbReference>
<dbReference type="Pfam" id="PF22042">
    <property type="entry name" value="EF-G_D2"/>
    <property type="match status" value="1"/>
</dbReference>
<dbReference type="Pfam" id="PF00009">
    <property type="entry name" value="GTP_EFTU"/>
    <property type="match status" value="1"/>
</dbReference>
<dbReference type="Pfam" id="PF16658">
    <property type="entry name" value="RF3_C"/>
    <property type="match status" value="1"/>
</dbReference>
<dbReference type="PRINTS" id="PR00315">
    <property type="entry name" value="ELONGATNFCT"/>
</dbReference>
<dbReference type="SUPFAM" id="SSF54980">
    <property type="entry name" value="EF-G C-terminal domain-like"/>
    <property type="match status" value="1"/>
</dbReference>
<dbReference type="SUPFAM" id="SSF52540">
    <property type="entry name" value="P-loop containing nucleoside triphosphate hydrolases"/>
    <property type="match status" value="1"/>
</dbReference>
<dbReference type="SUPFAM" id="SSF50447">
    <property type="entry name" value="Translation proteins"/>
    <property type="match status" value="1"/>
</dbReference>
<dbReference type="PROSITE" id="PS00301">
    <property type="entry name" value="G_TR_1"/>
    <property type="match status" value="1"/>
</dbReference>
<dbReference type="PROSITE" id="PS51722">
    <property type="entry name" value="G_TR_2"/>
    <property type="match status" value="1"/>
</dbReference>
<reference key="1">
    <citation type="journal article" date="2004" name="Nucleic Acids Res.">
        <title>Genome sequence of Symbiobacterium thermophilum, an uncultivable bacterium that depends on microbial commensalism.</title>
        <authorList>
            <person name="Ueda K."/>
            <person name="Yamashita A."/>
            <person name="Ishikawa J."/>
            <person name="Shimada M."/>
            <person name="Watsuji T."/>
            <person name="Morimura K."/>
            <person name="Ikeda H."/>
            <person name="Hattori M."/>
            <person name="Beppu T."/>
        </authorList>
    </citation>
    <scope>NUCLEOTIDE SEQUENCE [LARGE SCALE GENOMIC DNA]</scope>
    <source>
        <strain>DSM 24528 / JCM 14929 / IAM 14863 / T</strain>
    </source>
</reference>
<proteinExistence type="inferred from homology"/>
<organism>
    <name type="scientific">Symbiobacterium thermophilum (strain DSM 24528 / JCM 14929 / IAM 14863 / T)</name>
    <dbReference type="NCBI Taxonomy" id="292459"/>
    <lineage>
        <taxon>Bacteria</taxon>
        <taxon>Bacillati</taxon>
        <taxon>Bacillota</taxon>
        <taxon>Clostridia</taxon>
        <taxon>Eubacteriales</taxon>
        <taxon>Symbiobacteriaceae</taxon>
        <taxon>Symbiobacterium</taxon>
    </lineage>
</organism>
<sequence length="528" mass="59895">MDSLADQIRRRRTFAIISHPDAGKTTLTEKLLLYGGAIRLAGAVKGRKAARAATSDWMEIEKQRGISVTTSVMQFEYGGCMVNILDTPGHQDFSEDTYRTLEAADSAVMLIDAAKGVEPQTIKLFQVCRMRGIPIFTFVNKLDREGKDPFALMQEIEDVLGMRTCPMNWPVGMGSTFKGVYDRQKGHVELFDNRDHGQTKARVETTGVDDPALSAVLGEDLHRRLVEEIELLDVAGDPWDFDRFRRGDLSPLFWGSALTNFGVQSFLEYFLKLAPAPAPRLAGDRLVDPEEPRFSAFVFKIQANMNPAHRDRIAFMRIVSGRFERGMDVQHVRLGKKVRLSQPQQFMAQDRQIVEEAYAGDIIGVFDPGIFRIGDTLCTGEPVAFEGIPSFSPEHFARVRFKDAMKSKHFRKGLEELTEEGAIQVFYATQPGHPDPILGAVGELQFEVFQHRMRHEYGVEVILDRLPYEVARWVEGEGYQPRRFWGTDHMAVTDRDGRNVLLFRNEWTMRYVVEQNPGLIFRATAQAR</sequence>
<gene>
    <name evidence="1" type="primary">prfC</name>
    <name type="ordered locus">STH2023</name>
</gene>
<protein>
    <recommendedName>
        <fullName evidence="1">Peptide chain release factor 3</fullName>
        <shortName evidence="1">RF-3</shortName>
    </recommendedName>
</protein>
<comment type="function">
    <text evidence="1">Increases the formation of ribosomal termination complexes and stimulates activities of RF-1 and RF-2. It binds guanine nucleotides and has strong preference for UGA stop codons. It may interact directly with the ribosome. The stimulation of RF-1 and RF-2 is significantly reduced by GTP and GDP, but not by GMP.</text>
</comment>
<comment type="subcellular location">
    <subcellularLocation>
        <location evidence="1">Cytoplasm</location>
    </subcellularLocation>
</comment>
<comment type="similarity">
    <text evidence="1">Belongs to the TRAFAC class translation factor GTPase superfamily. Classic translation factor GTPase family. PrfC subfamily.</text>
</comment>
<comment type="sequence caution" evidence="2">
    <conflict type="erroneous initiation">
        <sequence resource="EMBL-CDS" id="BAD41008"/>
    </conflict>
</comment>
<name>RF3_SYMTH</name>
<accession>Q67MT5</accession>
<evidence type="ECO:0000255" key="1">
    <source>
        <dbReference type="HAMAP-Rule" id="MF_00072"/>
    </source>
</evidence>
<evidence type="ECO:0000305" key="2"/>